<accession>Q6G782</accession>
<dbReference type="EMBL" id="BX571857">
    <property type="protein sequence ID" value="CAG43941.1"/>
    <property type="molecule type" value="Genomic_DNA"/>
</dbReference>
<dbReference type="RefSeq" id="WP_000547687.1">
    <property type="nucleotide sequence ID" value="NC_002953.3"/>
</dbReference>
<dbReference type="SMR" id="Q6G782"/>
<dbReference type="KEGG" id="sas:SAS2130"/>
<dbReference type="HOGENOM" id="CLU_093315_2_0_9"/>
<dbReference type="GO" id="GO:1990904">
    <property type="term" value="C:ribonucleoprotein complex"/>
    <property type="evidence" value="ECO:0007669"/>
    <property type="project" value="UniProtKB-KW"/>
</dbReference>
<dbReference type="GO" id="GO:0005840">
    <property type="term" value="C:ribosome"/>
    <property type="evidence" value="ECO:0007669"/>
    <property type="project" value="UniProtKB-KW"/>
</dbReference>
<dbReference type="GO" id="GO:0019843">
    <property type="term" value="F:rRNA binding"/>
    <property type="evidence" value="ECO:0007669"/>
    <property type="project" value="UniProtKB-UniRule"/>
</dbReference>
<dbReference type="GO" id="GO:0003735">
    <property type="term" value="F:structural constituent of ribosome"/>
    <property type="evidence" value="ECO:0007669"/>
    <property type="project" value="InterPro"/>
</dbReference>
<dbReference type="GO" id="GO:0006412">
    <property type="term" value="P:translation"/>
    <property type="evidence" value="ECO:0007669"/>
    <property type="project" value="UniProtKB-UniRule"/>
</dbReference>
<dbReference type="CDD" id="cd06089">
    <property type="entry name" value="KOW_RPL26"/>
    <property type="match status" value="1"/>
</dbReference>
<dbReference type="FunFam" id="2.30.30.30:FF:000004">
    <property type="entry name" value="50S ribosomal protein L24"/>
    <property type="match status" value="1"/>
</dbReference>
<dbReference type="Gene3D" id="2.30.30.30">
    <property type="match status" value="1"/>
</dbReference>
<dbReference type="HAMAP" id="MF_01326_B">
    <property type="entry name" value="Ribosomal_uL24_B"/>
    <property type="match status" value="1"/>
</dbReference>
<dbReference type="InterPro" id="IPR005824">
    <property type="entry name" value="KOW"/>
</dbReference>
<dbReference type="InterPro" id="IPR014722">
    <property type="entry name" value="Rib_uL2_dom2"/>
</dbReference>
<dbReference type="InterPro" id="IPR003256">
    <property type="entry name" value="Ribosomal_uL24"/>
</dbReference>
<dbReference type="InterPro" id="IPR005825">
    <property type="entry name" value="Ribosomal_uL24_CS"/>
</dbReference>
<dbReference type="InterPro" id="IPR041988">
    <property type="entry name" value="Ribosomal_uL24_KOW"/>
</dbReference>
<dbReference type="InterPro" id="IPR008991">
    <property type="entry name" value="Translation_prot_SH3-like_sf"/>
</dbReference>
<dbReference type="NCBIfam" id="TIGR01079">
    <property type="entry name" value="rplX_bact"/>
    <property type="match status" value="1"/>
</dbReference>
<dbReference type="PANTHER" id="PTHR12903">
    <property type="entry name" value="MITOCHONDRIAL RIBOSOMAL PROTEIN L24"/>
    <property type="match status" value="1"/>
</dbReference>
<dbReference type="Pfam" id="PF00467">
    <property type="entry name" value="KOW"/>
    <property type="match status" value="1"/>
</dbReference>
<dbReference type="Pfam" id="PF17136">
    <property type="entry name" value="ribosomal_L24"/>
    <property type="match status" value="1"/>
</dbReference>
<dbReference type="SMART" id="SM00739">
    <property type="entry name" value="KOW"/>
    <property type="match status" value="1"/>
</dbReference>
<dbReference type="SUPFAM" id="SSF50104">
    <property type="entry name" value="Translation proteins SH3-like domain"/>
    <property type="match status" value="1"/>
</dbReference>
<dbReference type="PROSITE" id="PS01108">
    <property type="entry name" value="RIBOSOMAL_L24"/>
    <property type="match status" value="1"/>
</dbReference>
<proteinExistence type="inferred from homology"/>
<feature type="chain" id="PRO_0000130718" description="Large ribosomal subunit protein uL24">
    <location>
        <begin position="1"/>
        <end position="105"/>
    </location>
</feature>
<sequence length="105" mass="11536">MHIKKGDNVKVIAGKDKGKEGKVIATLPKKDRVVVEGVNIMKKHQKPTQLNPEGGILETEAAIHVSNVQLLDPKTNEPTRVGYKFVDGKKVRIAKKSGEEIKSNN</sequence>
<reference key="1">
    <citation type="journal article" date="2004" name="Proc. Natl. Acad. Sci. U.S.A.">
        <title>Complete genomes of two clinical Staphylococcus aureus strains: evidence for the rapid evolution of virulence and drug resistance.</title>
        <authorList>
            <person name="Holden M.T.G."/>
            <person name="Feil E.J."/>
            <person name="Lindsay J.A."/>
            <person name="Peacock S.J."/>
            <person name="Day N.P.J."/>
            <person name="Enright M.C."/>
            <person name="Foster T.J."/>
            <person name="Moore C.E."/>
            <person name="Hurst L."/>
            <person name="Atkin R."/>
            <person name="Barron A."/>
            <person name="Bason N."/>
            <person name="Bentley S.D."/>
            <person name="Chillingworth C."/>
            <person name="Chillingworth T."/>
            <person name="Churcher C."/>
            <person name="Clark L."/>
            <person name="Corton C."/>
            <person name="Cronin A."/>
            <person name="Doggett J."/>
            <person name="Dowd L."/>
            <person name="Feltwell T."/>
            <person name="Hance Z."/>
            <person name="Harris B."/>
            <person name="Hauser H."/>
            <person name="Holroyd S."/>
            <person name="Jagels K."/>
            <person name="James K.D."/>
            <person name="Lennard N."/>
            <person name="Line A."/>
            <person name="Mayes R."/>
            <person name="Moule S."/>
            <person name="Mungall K."/>
            <person name="Ormond D."/>
            <person name="Quail M.A."/>
            <person name="Rabbinowitsch E."/>
            <person name="Rutherford K.M."/>
            <person name="Sanders M."/>
            <person name="Sharp S."/>
            <person name="Simmonds M."/>
            <person name="Stevens K."/>
            <person name="Whitehead S."/>
            <person name="Barrell B.G."/>
            <person name="Spratt B.G."/>
            <person name="Parkhill J."/>
        </authorList>
    </citation>
    <scope>NUCLEOTIDE SEQUENCE [LARGE SCALE GENOMIC DNA]</scope>
    <source>
        <strain>MSSA476</strain>
    </source>
</reference>
<comment type="function">
    <text evidence="1">One of two assembly initiator proteins, it binds directly to the 5'-end of the 23S rRNA, where it nucleates assembly of the 50S subunit.</text>
</comment>
<comment type="function">
    <text evidence="1">One of the proteins that surrounds the polypeptide exit tunnel on the outside of the subunit.</text>
</comment>
<comment type="subunit">
    <text evidence="1">Part of the 50S ribosomal subunit.</text>
</comment>
<comment type="similarity">
    <text evidence="1">Belongs to the universal ribosomal protein uL24 family.</text>
</comment>
<gene>
    <name evidence="1" type="primary">rplX</name>
    <name type="ordered locus">SAS2130</name>
</gene>
<keyword id="KW-0687">Ribonucleoprotein</keyword>
<keyword id="KW-0689">Ribosomal protein</keyword>
<keyword id="KW-0694">RNA-binding</keyword>
<keyword id="KW-0699">rRNA-binding</keyword>
<evidence type="ECO:0000255" key="1">
    <source>
        <dbReference type="HAMAP-Rule" id="MF_01326"/>
    </source>
</evidence>
<evidence type="ECO:0000305" key="2"/>
<organism>
    <name type="scientific">Staphylococcus aureus (strain MSSA476)</name>
    <dbReference type="NCBI Taxonomy" id="282459"/>
    <lineage>
        <taxon>Bacteria</taxon>
        <taxon>Bacillati</taxon>
        <taxon>Bacillota</taxon>
        <taxon>Bacilli</taxon>
        <taxon>Bacillales</taxon>
        <taxon>Staphylococcaceae</taxon>
        <taxon>Staphylococcus</taxon>
    </lineage>
</organism>
<name>RL24_STAAS</name>
<protein>
    <recommendedName>
        <fullName evidence="1">Large ribosomal subunit protein uL24</fullName>
    </recommendedName>
    <alternativeName>
        <fullName evidence="2">50S ribosomal protein L24</fullName>
    </alternativeName>
</protein>